<sequence>MGQKVHPHGIRLGIVKPWSSTWFANTQDFADNLEGDFKVRQFLNKELANASVSRITIERPAKSIRVTIHTARPGIVIGKKGEDVEKLRNAVAKIAGVPAQINIAEVKKPELDAKLVADSIASQLERRVMFRRAMKKAVQNAMRLGAKGIKVEVSGRLGGAEIARSEWYREGRVPLHTLRADIDYNTAEAHTTYGVIGVKVWIFKGEILGGMAALAQPEQQPTDKPKKVPRGKGRK</sequence>
<gene>
    <name evidence="2" type="primary">rpsC</name>
</gene>
<accession>P55827</accession>
<keyword id="KW-0687">Ribonucleoprotein</keyword>
<keyword id="KW-0689">Ribosomal protein</keyword>
<keyword id="KW-0694">RNA-binding</keyword>
<keyword id="KW-0699">rRNA-binding</keyword>
<reference key="1">
    <citation type="journal article" date="1996" name="Microbiology">
        <title>Molecular analysis of a new insertion sequence from Actinobacillus (Haemophilus) actinomycetemcomitans FDC Y4.</title>
        <authorList>
            <person name="Hayashida H."/>
            <person name="Hotokezaka H."/>
            <person name="Ohara N."/>
            <person name="Kimura M."/>
            <person name="Takagi O."/>
            <person name="Yamada T."/>
        </authorList>
    </citation>
    <scope>NUCLEOTIDE SEQUENCE [GENOMIC DNA]</scope>
    <source>
        <strain>ATCC 43718 / FDC Y4 / Serotype b</strain>
    </source>
</reference>
<protein>
    <recommendedName>
        <fullName evidence="2">Small ribosomal subunit protein uS3</fullName>
    </recommendedName>
    <alternativeName>
        <fullName evidence="4">30S ribosomal protein S3</fullName>
    </alternativeName>
</protein>
<comment type="function">
    <text evidence="2">Binds the lower part of the 30S subunit head. Binds mRNA in the 70S ribosome, positioning it for translation.</text>
</comment>
<comment type="subunit">
    <text evidence="2">Part of the 30S ribosomal subunit. Forms a tight complex with proteins S10 and S14.</text>
</comment>
<comment type="similarity">
    <text evidence="2">Belongs to the universal ribosomal protein uS3 family.</text>
</comment>
<proteinExistence type="inferred from homology"/>
<dbReference type="EMBL" id="D64071">
    <property type="protein sequence ID" value="BAA10953.1"/>
    <property type="molecule type" value="Genomic_DNA"/>
</dbReference>
<dbReference type="RefSeq" id="WP_005545489.1">
    <property type="nucleotide sequence ID" value="NZ_VSEW01000015.1"/>
</dbReference>
<dbReference type="SMR" id="P55827"/>
<dbReference type="STRING" id="714.ACT75_03730"/>
<dbReference type="GeneID" id="77210690"/>
<dbReference type="eggNOG" id="COG0092">
    <property type="taxonomic scope" value="Bacteria"/>
</dbReference>
<dbReference type="OMA" id="KTNPIGN"/>
<dbReference type="GO" id="GO:0022627">
    <property type="term" value="C:cytosolic small ribosomal subunit"/>
    <property type="evidence" value="ECO:0007669"/>
    <property type="project" value="TreeGrafter"/>
</dbReference>
<dbReference type="GO" id="GO:0003729">
    <property type="term" value="F:mRNA binding"/>
    <property type="evidence" value="ECO:0007669"/>
    <property type="project" value="UniProtKB-UniRule"/>
</dbReference>
<dbReference type="GO" id="GO:0019843">
    <property type="term" value="F:rRNA binding"/>
    <property type="evidence" value="ECO:0007669"/>
    <property type="project" value="UniProtKB-UniRule"/>
</dbReference>
<dbReference type="GO" id="GO:0003735">
    <property type="term" value="F:structural constituent of ribosome"/>
    <property type="evidence" value="ECO:0007669"/>
    <property type="project" value="InterPro"/>
</dbReference>
<dbReference type="GO" id="GO:0006412">
    <property type="term" value="P:translation"/>
    <property type="evidence" value="ECO:0007669"/>
    <property type="project" value="UniProtKB-UniRule"/>
</dbReference>
<dbReference type="CDD" id="cd02412">
    <property type="entry name" value="KH-II_30S_S3"/>
    <property type="match status" value="1"/>
</dbReference>
<dbReference type="FunFam" id="3.30.1140.32:FF:000001">
    <property type="entry name" value="30S ribosomal protein S3"/>
    <property type="match status" value="1"/>
</dbReference>
<dbReference type="FunFam" id="3.30.300.20:FF:000001">
    <property type="entry name" value="30S ribosomal protein S3"/>
    <property type="match status" value="1"/>
</dbReference>
<dbReference type="Gene3D" id="3.30.300.20">
    <property type="match status" value="1"/>
</dbReference>
<dbReference type="Gene3D" id="3.30.1140.32">
    <property type="entry name" value="Ribosomal protein S3, C-terminal domain"/>
    <property type="match status" value="1"/>
</dbReference>
<dbReference type="HAMAP" id="MF_01309_B">
    <property type="entry name" value="Ribosomal_uS3_B"/>
    <property type="match status" value="1"/>
</dbReference>
<dbReference type="InterPro" id="IPR004087">
    <property type="entry name" value="KH_dom"/>
</dbReference>
<dbReference type="InterPro" id="IPR015946">
    <property type="entry name" value="KH_dom-like_a/b"/>
</dbReference>
<dbReference type="InterPro" id="IPR004044">
    <property type="entry name" value="KH_dom_type_2"/>
</dbReference>
<dbReference type="InterPro" id="IPR009019">
    <property type="entry name" value="KH_sf_prok-type"/>
</dbReference>
<dbReference type="InterPro" id="IPR036419">
    <property type="entry name" value="Ribosomal_S3_C_sf"/>
</dbReference>
<dbReference type="InterPro" id="IPR005704">
    <property type="entry name" value="Ribosomal_uS3_bac-typ"/>
</dbReference>
<dbReference type="InterPro" id="IPR001351">
    <property type="entry name" value="Ribosomal_uS3_C"/>
</dbReference>
<dbReference type="InterPro" id="IPR018280">
    <property type="entry name" value="Ribosomal_uS3_CS"/>
</dbReference>
<dbReference type="NCBIfam" id="TIGR01009">
    <property type="entry name" value="rpsC_bact"/>
    <property type="match status" value="1"/>
</dbReference>
<dbReference type="PANTHER" id="PTHR11760">
    <property type="entry name" value="30S/40S RIBOSOMAL PROTEIN S3"/>
    <property type="match status" value="1"/>
</dbReference>
<dbReference type="PANTHER" id="PTHR11760:SF19">
    <property type="entry name" value="SMALL RIBOSOMAL SUBUNIT PROTEIN US3C"/>
    <property type="match status" value="1"/>
</dbReference>
<dbReference type="Pfam" id="PF07650">
    <property type="entry name" value="KH_2"/>
    <property type="match status" value="1"/>
</dbReference>
<dbReference type="Pfam" id="PF00189">
    <property type="entry name" value="Ribosomal_S3_C"/>
    <property type="match status" value="1"/>
</dbReference>
<dbReference type="SMART" id="SM00322">
    <property type="entry name" value="KH"/>
    <property type="match status" value="1"/>
</dbReference>
<dbReference type="SUPFAM" id="SSF54814">
    <property type="entry name" value="Prokaryotic type KH domain (KH-domain type II)"/>
    <property type="match status" value="1"/>
</dbReference>
<dbReference type="SUPFAM" id="SSF54821">
    <property type="entry name" value="Ribosomal protein S3 C-terminal domain"/>
    <property type="match status" value="1"/>
</dbReference>
<dbReference type="PROSITE" id="PS50823">
    <property type="entry name" value="KH_TYPE_2"/>
    <property type="match status" value="1"/>
</dbReference>
<dbReference type="PROSITE" id="PS00548">
    <property type="entry name" value="RIBOSOMAL_S3"/>
    <property type="match status" value="1"/>
</dbReference>
<name>RS3_AGGAC</name>
<evidence type="ECO:0000250" key="1"/>
<evidence type="ECO:0000255" key="2">
    <source>
        <dbReference type="HAMAP-Rule" id="MF_01309"/>
    </source>
</evidence>
<evidence type="ECO:0000256" key="3">
    <source>
        <dbReference type="SAM" id="MobiDB-lite"/>
    </source>
</evidence>
<evidence type="ECO:0000305" key="4"/>
<feature type="initiator methionine" description="Removed" evidence="1">
    <location>
        <position position="1"/>
    </location>
</feature>
<feature type="chain" id="PRO_0000130056" description="Small ribosomal subunit protein uS3">
    <location>
        <begin position="2"/>
        <end position="235"/>
    </location>
</feature>
<feature type="domain" description="KH type-2" evidence="2">
    <location>
        <begin position="39"/>
        <end position="107"/>
    </location>
</feature>
<feature type="region of interest" description="Disordered" evidence="3">
    <location>
        <begin position="216"/>
        <end position="235"/>
    </location>
</feature>
<organism>
    <name type="scientific">Aggregatibacter actinomycetemcomitans</name>
    <name type="common">Actinobacillus actinomycetemcomitans</name>
    <name type="synonym">Haemophilus actinomycetemcomitans</name>
    <dbReference type="NCBI Taxonomy" id="714"/>
    <lineage>
        <taxon>Bacteria</taxon>
        <taxon>Pseudomonadati</taxon>
        <taxon>Pseudomonadota</taxon>
        <taxon>Gammaproteobacteria</taxon>
        <taxon>Pasteurellales</taxon>
        <taxon>Pasteurellaceae</taxon>
        <taxon>Aggregatibacter</taxon>
    </lineage>
</organism>